<gene>
    <name type="primary">fucA</name>
    <name type="ordered locus">MmarC7_0434</name>
</gene>
<accession>A6VGC7</accession>
<keyword id="KW-0456">Lyase</keyword>
<keyword id="KW-0479">Metal-binding</keyword>
<keyword id="KW-0862">Zinc</keyword>
<comment type="function">
    <text evidence="2">Involved in the biosynthesis of the coenzyme F420 which requires phospholactate produced via the aldol cleavage of L-fuculose 1-phosphate and the NAD(+)-dependent oxidation of (S)-lactaldehyde. Catalyzes the reversible cleavage of L-fuculose 1-phosphate (Fuc1P) to yield dihydroxyacetone phosphate (DHAP) and S-lactaldehyde.</text>
</comment>
<comment type="catalytic activity">
    <reaction evidence="2">
        <text>L-fuculose 1-phosphate = (S)-lactaldehyde + dihydroxyacetone phosphate</text>
        <dbReference type="Rhea" id="RHEA:12933"/>
        <dbReference type="ChEBI" id="CHEBI:18041"/>
        <dbReference type="ChEBI" id="CHEBI:57642"/>
        <dbReference type="ChEBI" id="CHEBI:57846"/>
        <dbReference type="EC" id="4.1.2.17"/>
    </reaction>
</comment>
<comment type="cofactor">
    <cofactor evidence="2">
        <name>Zn(2+)</name>
        <dbReference type="ChEBI" id="CHEBI:29105"/>
    </cofactor>
    <text evidence="1">Binds 1 zinc ion per subunit.</text>
</comment>
<comment type="pathway">
    <text evidence="2">Cofactor biosynthesis; coenzyme F420 biosynthesis.</text>
</comment>
<comment type="subunit">
    <text evidence="2">Homotetramer.</text>
</comment>
<comment type="similarity">
    <text evidence="2">Belongs to the aldolase class II family. AraD/FucA subfamily.</text>
</comment>
<protein>
    <recommendedName>
        <fullName evidence="2">L-fuculose phosphate aldolase</fullName>
        <ecNumber evidence="2">4.1.2.17</ecNumber>
    </recommendedName>
    <alternativeName>
        <fullName evidence="2">L-fuculose-1-phosphate aldolase</fullName>
    </alternativeName>
</protein>
<feature type="chain" id="PRO_0000342596" description="L-fuculose phosphate aldolase">
    <location>
        <begin position="1"/>
        <end position="180"/>
    </location>
</feature>
<feature type="active site" description="Proton donor/acceptor" evidence="1">
    <location>
        <position position="68"/>
    </location>
</feature>
<feature type="binding site" evidence="1">
    <location>
        <begin position="24"/>
        <end position="25"/>
    </location>
    <ligand>
        <name>substrate</name>
    </ligand>
</feature>
<feature type="binding site" evidence="1">
    <location>
        <begin position="39"/>
        <end position="40"/>
    </location>
    <ligand>
        <name>substrate</name>
    </ligand>
</feature>
<feature type="binding site" evidence="1">
    <location>
        <begin position="66"/>
        <end position="67"/>
    </location>
    <ligand>
        <name>substrate</name>
    </ligand>
</feature>
<feature type="binding site" evidence="1">
    <location>
        <position position="68"/>
    </location>
    <ligand>
        <name>Zn(2+)</name>
        <dbReference type="ChEBI" id="CHEBI:29105"/>
        <note>catalytic</note>
    </ligand>
</feature>
<feature type="binding site" evidence="1">
    <location>
        <position position="87"/>
    </location>
    <ligand>
        <name>Zn(2+)</name>
        <dbReference type="ChEBI" id="CHEBI:29105"/>
        <note>catalytic</note>
    </ligand>
</feature>
<feature type="binding site" evidence="1">
    <location>
        <position position="89"/>
    </location>
    <ligand>
        <name>Zn(2+)</name>
        <dbReference type="ChEBI" id="CHEBI:29105"/>
        <note>catalytic</note>
    </ligand>
</feature>
<feature type="binding site" evidence="1">
    <location>
        <position position="147"/>
    </location>
    <ligand>
        <name>Zn(2+)</name>
        <dbReference type="ChEBI" id="CHEBI:29105"/>
        <note>catalytic</note>
    </ligand>
</feature>
<name>FUCA_METM7</name>
<evidence type="ECO:0000250" key="1">
    <source>
        <dbReference type="UniProtKB" id="P0AB87"/>
    </source>
</evidence>
<evidence type="ECO:0000250" key="2">
    <source>
        <dbReference type="UniProtKB" id="Q58813"/>
    </source>
</evidence>
<reference key="1">
    <citation type="submission" date="2007-06" db="EMBL/GenBank/DDBJ databases">
        <title>Complete sequence of Methanococcus maripaludis C7.</title>
        <authorList>
            <consortium name="US DOE Joint Genome Institute"/>
            <person name="Copeland A."/>
            <person name="Lucas S."/>
            <person name="Lapidus A."/>
            <person name="Barry K."/>
            <person name="Glavina del Rio T."/>
            <person name="Dalin E."/>
            <person name="Tice H."/>
            <person name="Pitluck S."/>
            <person name="Clum A."/>
            <person name="Schmutz J."/>
            <person name="Larimer F."/>
            <person name="Land M."/>
            <person name="Hauser L."/>
            <person name="Kyrpides N."/>
            <person name="Anderson I."/>
            <person name="Sieprawska-Lupa M."/>
            <person name="Whitman W.B."/>
            <person name="Richardson P."/>
        </authorList>
    </citation>
    <scope>NUCLEOTIDE SEQUENCE [LARGE SCALE GENOMIC DNA]</scope>
    <source>
        <strain>C7 / ATCC BAA-1331</strain>
    </source>
</reference>
<dbReference type="EC" id="4.1.2.17" evidence="2"/>
<dbReference type="EMBL" id="CP000745">
    <property type="protein sequence ID" value="ABR65503.1"/>
    <property type="molecule type" value="Genomic_DNA"/>
</dbReference>
<dbReference type="SMR" id="A6VGC7"/>
<dbReference type="STRING" id="426368.MmarC7_0434"/>
<dbReference type="KEGG" id="mmz:MmarC7_0434"/>
<dbReference type="eggNOG" id="arCOG04226">
    <property type="taxonomic scope" value="Archaea"/>
</dbReference>
<dbReference type="HOGENOM" id="CLU_006033_3_4_2"/>
<dbReference type="OrthoDB" id="18709at2157"/>
<dbReference type="UniPathway" id="UPA00071"/>
<dbReference type="GO" id="GO:0005829">
    <property type="term" value="C:cytosol"/>
    <property type="evidence" value="ECO:0007669"/>
    <property type="project" value="TreeGrafter"/>
</dbReference>
<dbReference type="GO" id="GO:0008738">
    <property type="term" value="F:L-fuculose-phosphate aldolase activity"/>
    <property type="evidence" value="ECO:0000250"/>
    <property type="project" value="UniProtKB"/>
</dbReference>
<dbReference type="GO" id="GO:0008270">
    <property type="term" value="F:zinc ion binding"/>
    <property type="evidence" value="ECO:0000250"/>
    <property type="project" value="UniProtKB"/>
</dbReference>
<dbReference type="GO" id="GO:0019323">
    <property type="term" value="P:pentose catabolic process"/>
    <property type="evidence" value="ECO:0007669"/>
    <property type="project" value="TreeGrafter"/>
</dbReference>
<dbReference type="FunFam" id="3.40.225.10:FF:000008">
    <property type="entry name" value="Sugar aldolase"/>
    <property type="match status" value="1"/>
</dbReference>
<dbReference type="Gene3D" id="3.40.225.10">
    <property type="entry name" value="Class II aldolase/adducin N-terminal domain"/>
    <property type="match status" value="1"/>
</dbReference>
<dbReference type="InterPro" id="IPR050197">
    <property type="entry name" value="Aldolase_class_II_sugar_metab"/>
</dbReference>
<dbReference type="InterPro" id="IPR001303">
    <property type="entry name" value="Aldolase_II/adducin_N"/>
</dbReference>
<dbReference type="InterPro" id="IPR036409">
    <property type="entry name" value="Aldolase_II/adducin_N_sf"/>
</dbReference>
<dbReference type="InterPro" id="IPR053406">
    <property type="entry name" value="Fuculose-P_aldolase"/>
</dbReference>
<dbReference type="NCBIfam" id="NF040649">
    <property type="entry name" value="FucA_Meth"/>
    <property type="match status" value="1"/>
</dbReference>
<dbReference type="PANTHER" id="PTHR22789:SF0">
    <property type="entry name" value="3-OXO-TETRONATE 4-PHOSPHATE DECARBOXYLASE-RELATED"/>
    <property type="match status" value="1"/>
</dbReference>
<dbReference type="PANTHER" id="PTHR22789">
    <property type="entry name" value="FUCULOSE PHOSPHATE ALDOLASE"/>
    <property type="match status" value="1"/>
</dbReference>
<dbReference type="Pfam" id="PF00596">
    <property type="entry name" value="Aldolase_II"/>
    <property type="match status" value="1"/>
</dbReference>
<dbReference type="SMART" id="SM01007">
    <property type="entry name" value="Aldolase_II"/>
    <property type="match status" value="1"/>
</dbReference>
<dbReference type="SUPFAM" id="SSF53639">
    <property type="entry name" value="AraD/HMP-PK domain-like"/>
    <property type="match status" value="1"/>
</dbReference>
<organism>
    <name type="scientific">Methanococcus maripaludis (strain C7 / ATCC BAA-1331)</name>
    <dbReference type="NCBI Taxonomy" id="426368"/>
    <lineage>
        <taxon>Archaea</taxon>
        <taxon>Methanobacteriati</taxon>
        <taxon>Methanobacteriota</taxon>
        <taxon>Methanomada group</taxon>
        <taxon>Methanococci</taxon>
        <taxon>Methanococcales</taxon>
        <taxon>Methanococcaceae</taxon>
        <taxon>Methanococcus</taxon>
    </lineage>
</organism>
<proteinExistence type="inferred from homology"/>
<sequence length="180" mass="20039">MDLINFIKICHLLYDRKYVVGSGGNVSIRDGNHIYITPTGSILGFLNEEDVCIVDLNGNIIKGKPTSELNMHLKIYQNKDCVNAIVHTHSMYCTAFSALDKKLELFTPEAEIVVKKIAYVDYSPCGSLELAENVSSCVEDSIILKNHGIVTVGKDITEAYVKTEVLEEIAQLNYIINNLK</sequence>